<gene>
    <name evidence="1" type="primary">murC</name>
    <name type="ordered locus">sce1665</name>
</gene>
<evidence type="ECO:0000255" key="1">
    <source>
        <dbReference type="HAMAP-Rule" id="MF_00046"/>
    </source>
</evidence>
<feature type="chain" id="PRO_0000336870" description="UDP-N-acetylmuramate--L-alanine ligase">
    <location>
        <begin position="1"/>
        <end position="469"/>
    </location>
</feature>
<feature type="binding site" evidence="1">
    <location>
        <begin position="113"/>
        <end position="119"/>
    </location>
    <ligand>
        <name>ATP</name>
        <dbReference type="ChEBI" id="CHEBI:30616"/>
    </ligand>
</feature>
<protein>
    <recommendedName>
        <fullName evidence="1">UDP-N-acetylmuramate--L-alanine ligase</fullName>
        <ecNumber evidence="1">6.3.2.8</ecNumber>
    </recommendedName>
    <alternativeName>
        <fullName evidence="1">UDP-N-acetylmuramoyl-L-alanine synthetase</fullName>
    </alternativeName>
</protein>
<comment type="function">
    <text evidence="1">Cell wall formation.</text>
</comment>
<comment type="catalytic activity">
    <reaction evidence="1">
        <text>UDP-N-acetyl-alpha-D-muramate + L-alanine + ATP = UDP-N-acetyl-alpha-D-muramoyl-L-alanine + ADP + phosphate + H(+)</text>
        <dbReference type="Rhea" id="RHEA:23372"/>
        <dbReference type="ChEBI" id="CHEBI:15378"/>
        <dbReference type="ChEBI" id="CHEBI:30616"/>
        <dbReference type="ChEBI" id="CHEBI:43474"/>
        <dbReference type="ChEBI" id="CHEBI:57972"/>
        <dbReference type="ChEBI" id="CHEBI:70757"/>
        <dbReference type="ChEBI" id="CHEBI:83898"/>
        <dbReference type="ChEBI" id="CHEBI:456216"/>
        <dbReference type="EC" id="6.3.2.8"/>
    </reaction>
</comment>
<comment type="pathway">
    <text evidence="1">Cell wall biogenesis; peptidoglycan biosynthesis.</text>
</comment>
<comment type="subcellular location">
    <subcellularLocation>
        <location evidence="1">Cytoplasm</location>
    </subcellularLocation>
</comment>
<comment type="similarity">
    <text evidence="1">Belongs to the MurCDEF family.</text>
</comment>
<organism>
    <name type="scientific">Sorangium cellulosum (strain So ce56)</name>
    <name type="common">Polyangium cellulosum (strain So ce56)</name>
    <dbReference type="NCBI Taxonomy" id="448385"/>
    <lineage>
        <taxon>Bacteria</taxon>
        <taxon>Pseudomonadati</taxon>
        <taxon>Myxococcota</taxon>
        <taxon>Polyangia</taxon>
        <taxon>Polyangiales</taxon>
        <taxon>Polyangiaceae</taxon>
        <taxon>Sorangium</taxon>
    </lineage>
</organism>
<keyword id="KW-0067">ATP-binding</keyword>
<keyword id="KW-0131">Cell cycle</keyword>
<keyword id="KW-0132">Cell division</keyword>
<keyword id="KW-0133">Cell shape</keyword>
<keyword id="KW-0961">Cell wall biogenesis/degradation</keyword>
<keyword id="KW-0963">Cytoplasm</keyword>
<keyword id="KW-0436">Ligase</keyword>
<keyword id="KW-0547">Nucleotide-binding</keyword>
<keyword id="KW-0573">Peptidoglycan synthesis</keyword>
<keyword id="KW-1185">Reference proteome</keyword>
<reference key="1">
    <citation type="journal article" date="2007" name="Nat. Biotechnol.">
        <title>Complete genome sequence of the myxobacterium Sorangium cellulosum.</title>
        <authorList>
            <person name="Schneiker S."/>
            <person name="Perlova O."/>
            <person name="Kaiser O."/>
            <person name="Gerth K."/>
            <person name="Alici A."/>
            <person name="Altmeyer M.O."/>
            <person name="Bartels D."/>
            <person name="Bekel T."/>
            <person name="Beyer S."/>
            <person name="Bode E."/>
            <person name="Bode H.B."/>
            <person name="Bolten C.J."/>
            <person name="Choudhuri J.V."/>
            <person name="Doss S."/>
            <person name="Elnakady Y.A."/>
            <person name="Frank B."/>
            <person name="Gaigalat L."/>
            <person name="Goesmann A."/>
            <person name="Groeger C."/>
            <person name="Gross F."/>
            <person name="Jelsbak L."/>
            <person name="Jelsbak L."/>
            <person name="Kalinowski J."/>
            <person name="Kegler C."/>
            <person name="Knauber T."/>
            <person name="Konietzny S."/>
            <person name="Kopp M."/>
            <person name="Krause L."/>
            <person name="Krug D."/>
            <person name="Linke B."/>
            <person name="Mahmud T."/>
            <person name="Martinez-Arias R."/>
            <person name="McHardy A.C."/>
            <person name="Merai M."/>
            <person name="Meyer F."/>
            <person name="Mormann S."/>
            <person name="Munoz-Dorado J."/>
            <person name="Perez J."/>
            <person name="Pradella S."/>
            <person name="Rachid S."/>
            <person name="Raddatz G."/>
            <person name="Rosenau F."/>
            <person name="Rueckert C."/>
            <person name="Sasse F."/>
            <person name="Scharfe M."/>
            <person name="Schuster S.C."/>
            <person name="Suen G."/>
            <person name="Treuner-Lange A."/>
            <person name="Velicer G.J."/>
            <person name="Vorholter F.-J."/>
            <person name="Weissman K.J."/>
            <person name="Welch R.D."/>
            <person name="Wenzel S.C."/>
            <person name="Whitworth D.E."/>
            <person name="Wilhelm S."/>
            <person name="Wittmann C."/>
            <person name="Bloecker H."/>
            <person name="Puehler A."/>
            <person name="Mueller R."/>
        </authorList>
    </citation>
    <scope>NUCLEOTIDE SEQUENCE [LARGE SCALE GENOMIC DNA]</scope>
    <source>
        <strain>So ce56</strain>
    </source>
</reference>
<proteinExistence type="inferred from homology"/>
<dbReference type="EC" id="6.3.2.8" evidence="1"/>
<dbReference type="EMBL" id="AM746676">
    <property type="protein sequence ID" value="CAN91823.1"/>
    <property type="molecule type" value="Genomic_DNA"/>
</dbReference>
<dbReference type="RefSeq" id="WP_012234300.1">
    <property type="nucleotide sequence ID" value="NC_010162.1"/>
</dbReference>
<dbReference type="SMR" id="A9FI59"/>
<dbReference type="STRING" id="448385.sce1665"/>
<dbReference type="KEGG" id="scl:sce1665"/>
<dbReference type="eggNOG" id="COG0773">
    <property type="taxonomic scope" value="Bacteria"/>
</dbReference>
<dbReference type="HOGENOM" id="CLU_028104_2_2_7"/>
<dbReference type="OrthoDB" id="9804126at2"/>
<dbReference type="BioCyc" id="SCEL448385:SCE_RS08570-MONOMER"/>
<dbReference type="UniPathway" id="UPA00219"/>
<dbReference type="Proteomes" id="UP000002139">
    <property type="component" value="Chromosome"/>
</dbReference>
<dbReference type="GO" id="GO:0005737">
    <property type="term" value="C:cytoplasm"/>
    <property type="evidence" value="ECO:0007669"/>
    <property type="project" value="UniProtKB-SubCell"/>
</dbReference>
<dbReference type="GO" id="GO:0005524">
    <property type="term" value="F:ATP binding"/>
    <property type="evidence" value="ECO:0007669"/>
    <property type="project" value="UniProtKB-UniRule"/>
</dbReference>
<dbReference type="GO" id="GO:0008763">
    <property type="term" value="F:UDP-N-acetylmuramate-L-alanine ligase activity"/>
    <property type="evidence" value="ECO:0007669"/>
    <property type="project" value="UniProtKB-UniRule"/>
</dbReference>
<dbReference type="GO" id="GO:0051301">
    <property type="term" value="P:cell division"/>
    <property type="evidence" value="ECO:0007669"/>
    <property type="project" value="UniProtKB-KW"/>
</dbReference>
<dbReference type="GO" id="GO:0071555">
    <property type="term" value="P:cell wall organization"/>
    <property type="evidence" value="ECO:0007669"/>
    <property type="project" value="UniProtKB-KW"/>
</dbReference>
<dbReference type="GO" id="GO:0009252">
    <property type="term" value="P:peptidoglycan biosynthetic process"/>
    <property type="evidence" value="ECO:0007669"/>
    <property type="project" value="UniProtKB-UniRule"/>
</dbReference>
<dbReference type="GO" id="GO:0008360">
    <property type="term" value="P:regulation of cell shape"/>
    <property type="evidence" value="ECO:0007669"/>
    <property type="project" value="UniProtKB-KW"/>
</dbReference>
<dbReference type="Gene3D" id="3.90.190.20">
    <property type="entry name" value="Mur ligase, C-terminal domain"/>
    <property type="match status" value="1"/>
</dbReference>
<dbReference type="Gene3D" id="3.40.1190.10">
    <property type="entry name" value="Mur-like, catalytic domain"/>
    <property type="match status" value="1"/>
</dbReference>
<dbReference type="Gene3D" id="3.40.50.720">
    <property type="entry name" value="NAD(P)-binding Rossmann-like Domain"/>
    <property type="match status" value="1"/>
</dbReference>
<dbReference type="HAMAP" id="MF_00046">
    <property type="entry name" value="MurC"/>
    <property type="match status" value="1"/>
</dbReference>
<dbReference type="InterPro" id="IPR036565">
    <property type="entry name" value="Mur-like_cat_sf"/>
</dbReference>
<dbReference type="InterPro" id="IPR004101">
    <property type="entry name" value="Mur_ligase_C"/>
</dbReference>
<dbReference type="InterPro" id="IPR036615">
    <property type="entry name" value="Mur_ligase_C_dom_sf"/>
</dbReference>
<dbReference type="InterPro" id="IPR013221">
    <property type="entry name" value="Mur_ligase_cen"/>
</dbReference>
<dbReference type="InterPro" id="IPR000713">
    <property type="entry name" value="Mur_ligase_N"/>
</dbReference>
<dbReference type="InterPro" id="IPR050061">
    <property type="entry name" value="MurCDEF_pg_biosynth"/>
</dbReference>
<dbReference type="InterPro" id="IPR005758">
    <property type="entry name" value="UDP-N-AcMur_Ala_ligase_MurC"/>
</dbReference>
<dbReference type="NCBIfam" id="TIGR01082">
    <property type="entry name" value="murC"/>
    <property type="match status" value="1"/>
</dbReference>
<dbReference type="PANTHER" id="PTHR43445:SF3">
    <property type="entry name" value="UDP-N-ACETYLMURAMATE--L-ALANINE LIGASE"/>
    <property type="match status" value="1"/>
</dbReference>
<dbReference type="PANTHER" id="PTHR43445">
    <property type="entry name" value="UDP-N-ACETYLMURAMATE--L-ALANINE LIGASE-RELATED"/>
    <property type="match status" value="1"/>
</dbReference>
<dbReference type="Pfam" id="PF01225">
    <property type="entry name" value="Mur_ligase"/>
    <property type="match status" value="1"/>
</dbReference>
<dbReference type="Pfam" id="PF02875">
    <property type="entry name" value="Mur_ligase_C"/>
    <property type="match status" value="1"/>
</dbReference>
<dbReference type="Pfam" id="PF08245">
    <property type="entry name" value="Mur_ligase_M"/>
    <property type="match status" value="1"/>
</dbReference>
<dbReference type="SUPFAM" id="SSF51984">
    <property type="entry name" value="MurCD N-terminal domain"/>
    <property type="match status" value="1"/>
</dbReference>
<dbReference type="SUPFAM" id="SSF53623">
    <property type="entry name" value="MurD-like peptide ligases, catalytic domain"/>
    <property type="match status" value="1"/>
</dbReference>
<dbReference type="SUPFAM" id="SSF53244">
    <property type="entry name" value="MurD-like peptide ligases, peptide-binding domain"/>
    <property type="match status" value="1"/>
</dbReference>
<accession>A9FI59</accession>
<sequence>MFRGRVRHVHFVGIGGVGMSGLAEILRSLEFEVSGSDLKESSTTRRLTSLGVRIDIGHRAENVRGVDVVVYSSAIRPENPELTEARALGTPVIGRAEMLAELMRVKYGVAIAGSHGKTTTTSLVATVLRAAGLDPTVVVGGKMAALGTNARLGAGDLLVAEADESDGSFLRLTPTIAVVTNIDPEHLDHYGTHERIKDAFVEFAARVPFYGLAVLCLDHPHVQDLLPRIPRRHVTYGVSPQSDYSARGIQFRGLETSFNAYRRGEPLGGFTVKMPGAHNVLNCLATIAVADELEVPLDVTKQALATFGGVARRFTVVGSIGGVTMIDDYGHHPAEIRATIDAARRAFPGEDHRVVVAFQPHRHTRTRDLFDEFTRAFNQADVLLVTDIYAAGEPPIPGVTAERLVQSIREHGHHDARFIADKTDLPEALEKIARPGDVVIALGAGDVNACVRGLKARLEAKSPPQEGSS</sequence>
<name>MURC_SORC5</name>